<protein>
    <recommendedName>
        <fullName evidence="1">Ribosomal RNA small subunit methyltransferase A</fullName>
        <ecNumber evidence="1">2.1.1.182</ecNumber>
    </recommendedName>
    <alternativeName>
        <fullName evidence="1">16S rRNA (adenine(1518)-N(6)/adenine(1519)-N(6))-dimethyltransferase</fullName>
    </alternativeName>
    <alternativeName>
        <fullName evidence="1">16S rRNA dimethyladenosine transferase</fullName>
    </alternativeName>
    <alternativeName>
        <fullName evidence="1">16S rRNA dimethylase</fullName>
    </alternativeName>
    <alternativeName>
        <fullName evidence="1">S-adenosylmethionine-6-N', N'-adenosyl(rRNA) dimethyltransferase</fullName>
    </alternativeName>
</protein>
<gene>
    <name evidence="1" type="primary">rsmA</name>
    <name evidence="1" type="synonym">ksgA</name>
    <name type="ordered locus">BA_0039</name>
    <name type="ordered locus">GBAA_0039</name>
    <name type="ordered locus">BAS0040</name>
</gene>
<sequence length="292" mass="32768">MKDIATPNRTKDIVEKYGFSFKKSLGQNFLIDTNVLNRIVDHAEIGSESGAIEIGPGIGALTEQLAKRAKKVVAFEIDQRLLPILDETLAPYGNVTVINKDVLKADVHEVFSEQFEEGQDVMVVANLPYYITTPILFKLLEEKLPVRGFVVMMQKEVGDRLAAKPGTKEYGSLSIAIQYYTEVETVMTVPRTVFVPQPNVDSAIIRLLKRPKPVVEVTDETFFFEVVRASFAQRRKTLMNNLSNNLNGFPKDKELLDRILTEVGIDPKRRGETLSIEEFATLSNALVLHKLS</sequence>
<dbReference type="EC" id="2.1.1.182" evidence="1"/>
<dbReference type="EMBL" id="AE016879">
    <property type="protein sequence ID" value="AAP24094.1"/>
    <property type="molecule type" value="Genomic_DNA"/>
</dbReference>
<dbReference type="EMBL" id="AE017334">
    <property type="protein sequence ID" value="AAT29118.1"/>
    <property type="molecule type" value="Genomic_DNA"/>
</dbReference>
<dbReference type="EMBL" id="AE017225">
    <property type="protein sequence ID" value="AAT52378.1"/>
    <property type="molecule type" value="Genomic_DNA"/>
</dbReference>
<dbReference type="RefSeq" id="NP_842608.1">
    <property type="nucleotide sequence ID" value="NC_003997.3"/>
</dbReference>
<dbReference type="RefSeq" id="WP_000651552.1">
    <property type="nucleotide sequence ID" value="NZ_WXXJ01000001.1"/>
</dbReference>
<dbReference type="RefSeq" id="YP_026327.1">
    <property type="nucleotide sequence ID" value="NC_005945.1"/>
</dbReference>
<dbReference type="SMR" id="Q81W00"/>
<dbReference type="STRING" id="261594.GBAA_0039"/>
<dbReference type="GeneID" id="75083305"/>
<dbReference type="KEGG" id="ban:BA_0039"/>
<dbReference type="KEGG" id="bar:GBAA_0039"/>
<dbReference type="KEGG" id="bat:BAS0040"/>
<dbReference type="PATRIC" id="fig|198094.11.peg.37"/>
<dbReference type="eggNOG" id="COG0030">
    <property type="taxonomic scope" value="Bacteria"/>
</dbReference>
<dbReference type="HOGENOM" id="CLU_041220_0_0_9"/>
<dbReference type="OMA" id="GMFQKEV"/>
<dbReference type="OrthoDB" id="9814755at2"/>
<dbReference type="Proteomes" id="UP000000427">
    <property type="component" value="Chromosome"/>
</dbReference>
<dbReference type="Proteomes" id="UP000000594">
    <property type="component" value="Chromosome"/>
</dbReference>
<dbReference type="GO" id="GO:0005829">
    <property type="term" value="C:cytosol"/>
    <property type="evidence" value="ECO:0007669"/>
    <property type="project" value="TreeGrafter"/>
</dbReference>
<dbReference type="GO" id="GO:0052908">
    <property type="term" value="F:16S rRNA (adenine(1518)-N(6)/adenine(1519)-N(6))-dimethyltransferase activity"/>
    <property type="evidence" value="ECO:0007669"/>
    <property type="project" value="UniProtKB-EC"/>
</dbReference>
<dbReference type="GO" id="GO:0003723">
    <property type="term" value="F:RNA binding"/>
    <property type="evidence" value="ECO:0007669"/>
    <property type="project" value="UniProtKB-KW"/>
</dbReference>
<dbReference type="CDD" id="cd02440">
    <property type="entry name" value="AdoMet_MTases"/>
    <property type="match status" value="1"/>
</dbReference>
<dbReference type="FunFam" id="1.10.8.100:FF:000002">
    <property type="entry name" value="Ribosomal RNA small subunit methyltransferase A"/>
    <property type="match status" value="1"/>
</dbReference>
<dbReference type="FunFam" id="3.40.50.150:FF:000023">
    <property type="entry name" value="Ribosomal RNA small subunit methyltransferase A"/>
    <property type="match status" value="1"/>
</dbReference>
<dbReference type="Gene3D" id="1.10.8.100">
    <property type="entry name" value="Ribosomal RNA adenine dimethylase-like, domain 2"/>
    <property type="match status" value="1"/>
</dbReference>
<dbReference type="Gene3D" id="3.40.50.150">
    <property type="entry name" value="Vaccinia Virus protein VP39"/>
    <property type="match status" value="1"/>
</dbReference>
<dbReference type="HAMAP" id="MF_00607">
    <property type="entry name" value="16SrRNA_methyltr_A"/>
    <property type="match status" value="1"/>
</dbReference>
<dbReference type="InterPro" id="IPR001737">
    <property type="entry name" value="KsgA/Erm"/>
</dbReference>
<dbReference type="InterPro" id="IPR023165">
    <property type="entry name" value="rRNA_Ade_diMease-like_C"/>
</dbReference>
<dbReference type="InterPro" id="IPR020596">
    <property type="entry name" value="rRNA_Ade_Mease_Trfase_CS"/>
</dbReference>
<dbReference type="InterPro" id="IPR020598">
    <property type="entry name" value="rRNA_Ade_methylase_Trfase_N"/>
</dbReference>
<dbReference type="InterPro" id="IPR011530">
    <property type="entry name" value="rRNA_adenine_dimethylase"/>
</dbReference>
<dbReference type="InterPro" id="IPR029063">
    <property type="entry name" value="SAM-dependent_MTases_sf"/>
</dbReference>
<dbReference type="NCBIfam" id="TIGR00755">
    <property type="entry name" value="ksgA"/>
    <property type="match status" value="1"/>
</dbReference>
<dbReference type="PANTHER" id="PTHR11727">
    <property type="entry name" value="DIMETHYLADENOSINE TRANSFERASE"/>
    <property type="match status" value="1"/>
</dbReference>
<dbReference type="PANTHER" id="PTHR11727:SF7">
    <property type="entry name" value="DIMETHYLADENOSINE TRANSFERASE-RELATED"/>
    <property type="match status" value="1"/>
</dbReference>
<dbReference type="Pfam" id="PF00398">
    <property type="entry name" value="RrnaAD"/>
    <property type="match status" value="1"/>
</dbReference>
<dbReference type="SMART" id="SM00650">
    <property type="entry name" value="rADc"/>
    <property type="match status" value="1"/>
</dbReference>
<dbReference type="SUPFAM" id="SSF53335">
    <property type="entry name" value="S-adenosyl-L-methionine-dependent methyltransferases"/>
    <property type="match status" value="1"/>
</dbReference>
<dbReference type="PROSITE" id="PS01131">
    <property type="entry name" value="RRNA_A_DIMETH"/>
    <property type="match status" value="1"/>
</dbReference>
<dbReference type="PROSITE" id="PS51689">
    <property type="entry name" value="SAM_RNA_A_N6_MT"/>
    <property type="match status" value="1"/>
</dbReference>
<keyword id="KW-0963">Cytoplasm</keyword>
<keyword id="KW-0489">Methyltransferase</keyword>
<keyword id="KW-1185">Reference proteome</keyword>
<keyword id="KW-0694">RNA-binding</keyword>
<keyword id="KW-0698">rRNA processing</keyword>
<keyword id="KW-0949">S-adenosyl-L-methionine</keyword>
<keyword id="KW-0808">Transferase</keyword>
<organism>
    <name type="scientific">Bacillus anthracis</name>
    <dbReference type="NCBI Taxonomy" id="1392"/>
    <lineage>
        <taxon>Bacteria</taxon>
        <taxon>Bacillati</taxon>
        <taxon>Bacillota</taxon>
        <taxon>Bacilli</taxon>
        <taxon>Bacillales</taxon>
        <taxon>Bacillaceae</taxon>
        <taxon>Bacillus</taxon>
        <taxon>Bacillus cereus group</taxon>
    </lineage>
</organism>
<accession>Q81W00</accession>
<accession>Q6I503</accession>
<accession>Q6KYP7</accession>
<comment type="function">
    <text evidence="1">Specifically dimethylates two adjacent adenosines (A1518 and A1519) in the loop of a conserved hairpin near the 3'-end of 16S rRNA in the 30S particle. May play a critical role in biogenesis of 30S subunits.</text>
</comment>
<comment type="catalytic activity">
    <reaction evidence="1">
        <text>adenosine(1518)/adenosine(1519) in 16S rRNA + 4 S-adenosyl-L-methionine = N(6)-dimethyladenosine(1518)/N(6)-dimethyladenosine(1519) in 16S rRNA + 4 S-adenosyl-L-homocysteine + 4 H(+)</text>
        <dbReference type="Rhea" id="RHEA:19609"/>
        <dbReference type="Rhea" id="RHEA-COMP:10232"/>
        <dbReference type="Rhea" id="RHEA-COMP:10233"/>
        <dbReference type="ChEBI" id="CHEBI:15378"/>
        <dbReference type="ChEBI" id="CHEBI:57856"/>
        <dbReference type="ChEBI" id="CHEBI:59789"/>
        <dbReference type="ChEBI" id="CHEBI:74411"/>
        <dbReference type="ChEBI" id="CHEBI:74493"/>
        <dbReference type="EC" id="2.1.1.182"/>
    </reaction>
</comment>
<comment type="subcellular location">
    <subcellularLocation>
        <location evidence="1">Cytoplasm</location>
    </subcellularLocation>
</comment>
<comment type="similarity">
    <text evidence="1">Belongs to the class I-like SAM-binding methyltransferase superfamily. rRNA adenine N(6)-methyltransferase family. RsmA subfamily.</text>
</comment>
<reference key="1">
    <citation type="journal article" date="2003" name="Nature">
        <title>The genome sequence of Bacillus anthracis Ames and comparison to closely related bacteria.</title>
        <authorList>
            <person name="Read T.D."/>
            <person name="Peterson S.N."/>
            <person name="Tourasse N.J."/>
            <person name="Baillie L.W."/>
            <person name="Paulsen I.T."/>
            <person name="Nelson K.E."/>
            <person name="Tettelin H."/>
            <person name="Fouts D.E."/>
            <person name="Eisen J.A."/>
            <person name="Gill S.R."/>
            <person name="Holtzapple E.K."/>
            <person name="Okstad O.A."/>
            <person name="Helgason E."/>
            <person name="Rilstone J."/>
            <person name="Wu M."/>
            <person name="Kolonay J.F."/>
            <person name="Beanan M.J."/>
            <person name="Dodson R.J."/>
            <person name="Brinkac L.M."/>
            <person name="Gwinn M.L."/>
            <person name="DeBoy R.T."/>
            <person name="Madpu R."/>
            <person name="Daugherty S.C."/>
            <person name="Durkin A.S."/>
            <person name="Haft D.H."/>
            <person name="Nelson W.C."/>
            <person name="Peterson J.D."/>
            <person name="Pop M."/>
            <person name="Khouri H.M."/>
            <person name="Radune D."/>
            <person name="Benton J.L."/>
            <person name="Mahamoud Y."/>
            <person name="Jiang L."/>
            <person name="Hance I.R."/>
            <person name="Weidman J.F."/>
            <person name="Berry K.J."/>
            <person name="Plaut R.D."/>
            <person name="Wolf A.M."/>
            <person name="Watkins K.L."/>
            <person name="Nierman W.C."/>
            <person name="Hazen A."/>
            <person name="Cline R.T."/>
            <person name="Redmond C."/>
            <person name="Thwaite J.E."/>
            <person name="White O."/>
            <person name="Salzberg S.L."/>
            <person name="Thomason B."/>
            <person name="Friedlander A.M."/>
            <person name="Koehler T.M."/>
            <person name="Hanna P.C."/>
            <person name="Kolstoe A.-B."/>
            <person name="Fraser C.M."/>
        </authorList>
    </citation>
    <scope>NUCLEOTIDE SEQUENCE [LARGE SCALE GENOMIC DNA]</scope>
    <source>
        <strain>Ames / isolate Porton</strain>
    </source>
</reference>
<reference key="2">
    <citation type="journal article" date="2009" name="J. Bacteriol.">
        <title>The complete genome sequence of Bacillus anthracis Ames 'Ancestor'.</title>
        <authorList>
            <person name="Ravel J."/>
            <person name="Jiang L."/>
            <person name="Stanley S.T."/>
            <person name="Wilson M.R."/>
            <person name="Decker R.S."/>
            <person name="Read T.D."/>
            <person name="Worsham P."/>
            <person name="Keim P.S."/>
            <person name="Salzberg S.L."/>
            <person name="Fraser-Liggett C.M."/>
            <person name="Rasko D.A."/>
        </authorList>
    </citation>
    <scope>NUCLEOTIDE SEQUENCE [LARGE SCALE GENOMIC DNA]</scope>
    <source>
        <strain>Ames ancestor</strain>
    </source>
</reference>
<reference key="3">
    <citation type="submission" date="2004-01" db="EMBL/GenBank/DDBJ databases">
        <title>Complete genome sequence of Bacillus anthracis Sterne.</title>
        <authorList>
            <person name="Brettin T.S."/>
            <person name="Bruce D."/>
            <person name="Challacombe J.F."/>
            <person name="Gilna P."/>
            <person name="Han C."/>
            <person name="Hill K."/>
            <person name="Hitchcock P."/>
            <person name="Jackson P."/>
            <person name="Keim P."/>
            <person name="Longmire J."/>
            <person name="Lucas S."/>
            <person name="Okinaka R."/>
            <person name="Richardson P."/>
            <person name="Rubin E."/>
            <person name="Tice H."/>
        </authorList>
    </citation>
    <scope>NUCLEOTIDE SEQUENCE [LARGE SCALE GENOMIC DNA]</scope>
    <source>
        <strain>Sterne</strain>
    </source>
</reference>
<proteinExistence type="inferred from homology"/>
<name>RSMA_BACAN</name>
<feature type="chain" id="PRO_0000101476" description="Ribosomal RNA small subunit methyltransferase A">
    <location>
        <begin position="1"/>
        <end position="292"/>
    </location>
</feature>
<feature type="binding site" evidence="1">
    <location>
        <position position="28"/>
    </location>
    <ligand>
        <name>S-adenosyl-L-methionine</name>
        <dbReference type="ChEBI" id="CHEBI:59789"/>
    </ligand>
</feature>
<feature type="binding site" evidence="1">
    <location>
        <position position="30"/>
    </location>
    <ligand>
        <name>S-adenosyl-L-methionine</name>
        <dbReference type="ChEBI" id="CHEBI:59789"/>
    </ligand>
</feature>
<feature type="binding site" evidence="1">
    <location>
        <position position="55"/>
    </location>
    <ligand>
        <name>S-adenosyl-L-methionine</name>
        <dbReference type="ChEBI" id="CHEBI:59789"/>
    </ligand>
</feature>
<feature type="binding site" evidence="1">
    <location>
        <position position="76"/>
    </location>
    <ligand>
        <name>S-adenosyl-L-methionine</name>
        <dbReference type="ChEBI" id="CHEBI:59789"/>
    </ligand>
</feature>
<feature type="binding site" evidence="1">
    <location>
        <position position="101"/>
    </location>
    <ligand>
        <name>S-adenosyl-L-methionine</name>
        <dbReference type="ChEBI" id="CHEBI:59789"/>
    </ligand>
</feature>
<feature type="binding site" evidence="1">
    <location>
        <position position="126"/>
    </location>
    <ligand>
        <name>S-adenosyl-L-methionine</name>
        <dbReference type="ChEBI" id="CHEBI:59789"/>
    </ligand>
</feature>
<evidence type="ECO:0000255" key="1">
    <source>
        <dbReference type="HAMAP-Rule" id="MF_00607"/>
    </source>
</evidence>